<comment type="function">
    <text evidence="1">Catalyzes the reversible isomerization-deamination of glucosamine 6-phosphate (GlcN6P) to form fructose 6-phosphate (Fru6P) and ammonium ion.</text>
</comment>
<comment type="catalytic activity">
    <reaction evidence="1">
        <text>alpha-D-glucosamine 6-phosphate + H2O = beta-D-fructose 6-phosphate + NH4(+)</text>
        <dbReference type="Rhea" id="RHEA:12172"/>
        <dbReference type="ChEBI" id="CHEBI:15377"/>
        <dbReference type="ChEBI" id="CHEBI:28938"/>
        <dbReference type="ChEBI" id="CHEBI:57634"/>
        <dbReference type="ChEBI" id="CHEBI:75989"/>
        <dbReference type="EC" id="3.5.99.6"/>
    </reaction>
</comment>
<comment type="pathway">
    <text evidence="1">Amino-sugar metabolism; N-acetylneuraminate degradation; D-fructose 6-phosphate from N-acetylneuraminate: step 5/5.</text>
</comment>
<comment type="similarity">
    <text evidence="1">Belongs to the glucosamine/galactosamine-6-phosphate isomerase family. NagB subfamily.</text>
</comment>
<keyword id="KW-0119">Carbohydrate metabolism</keyword>
<keyword id="KW-0378">Hydrolase</keyword>
<keyword id="KW-1185">Reference proteome</keyword>
<protein>
    <recommendedName>
        <fullName evidence="1">Glucosamine-6-phosphate deaminase</fullName>
        <ecNumber evidence="1">3.5.99.6</ecNumber>
    </recommendedName>
    <alternativeName>
        <fullName evidence="1">GlcN6P deaminase</fullName>
        <shortName evidence="1">GNPDA</shortName>
    </alternativeName>
    <alternativeName>
        <fullName evidence="1">Glucosamine-6-phosphate isomerase</fullName>
    </alternativeName>
</protein>
<accession>C0ZJF8</accession>
<gene>
    <name evidence="1" type="primary">nagB</name>
    <name type="ordered locus">BBR47_45560</name>
</gene>
<name>NAGB_BREBN</name>
<dbReference type="EC" id="3.5.99.6" evidence="1"/>
<dbReference type="EMBL" id="AP008955">
    <property type="protein sequence ID" value="BAH45533.1"/>
    <property type="molecule type" value="Genomic_DNA"/>
</dbReference>
<dbReference type="RefSeq" id="WP_015892795.1">
    <property type="nucleotide sequence ID" value="NC_012491.1"/>
</dbReference>
<dbReference type="SMR" id="C0ZJF8"/>
<dbReference type="STRING" id="358681.BBR47_45560"/>
<dbReference type="KEGG" id="bbe:BBR47_45560"/>
<dbReference type="eggNOG" id="COG0363">
    <property type="taxonomic scope" value="Bacteria"/>
</dbReference>
<dbReference type="HOGENOM" id="CLU_049611_1_1_9"/>
<dbReference type="UniPathway" id="UPA00629">
    <property type="reaction ID" value="UER00684"/>
</dbReference>
<dbReference type="Proteomes" id="UP000001877">
    <property type="component" value="Chromosome"/>
</dbReference>
<dbReference type="GO" id="GO:0005737">
    <property type="term" value="C:cytoplasm"/>
    <property type="evidence" value="ECO:0007669"/>
    <property type="project" value="TreeGrafter"/>
</dbReference>
<dbReference type="GO" id="GO:0004342">
    <property type="term" value="F:glucosamine-6-phosphate deaminase activity"/>
    <property type="evidence" value="ECO:0007669"/>
    <property type="project" value="UniProtKB-UniRule"/>
</dbReference>
<dbReference type="GO" id="GO:0042802">
    <property type="term" value="F:identical protein binding"/>
    <property type="evidence" value="ECO:0007669"/>
    <property type="project" value="TreeGrafter"/>
</dbReference>
<dbReference type="GO" id="GO:0005975">
    <property type="term" value="P:carbohydrate metabolic process"/>
    <property type="evidence" value="ECO:0007669"/>
    <property type="project" value="InterPro"/>
</dbReference>
<dbReference type="GO" id="GO:0006043">
    <property type="term" value="P:glucosamine catabolic process"/>
    <property type="evidence" value="ECO:0007669"/>
    <property type="project" value="TreeGrafter"/>
</dbReference>
<dbReference type="GO" id="GO:0006046">
    <property type="term" value="P:N-acetylglucosamine catabolic process"/>
    <property type="evidence" value="ECO:0007669"/>
    <property type="project" value="TreeGrafter"/>
</dbReference>
<dbReference type="GO" id="GO:0019262">
    <property type="term" value="P:N-acetylneuraminate catabolic process"/>
    <property type="evidence" value="ECO:0007669"/>
    <property type="project" value="UniProtKB-UniRule"/>
</dbReference>
<dbReference type="CDD" id="cd01399">
    <property type="entry name" value="GlcN6P_deaminase"/>
    <property type="match status" value="1"/>
</dbReference>
<dbReference type="FunFam" id="3.40.50.1360:FF:000003">
    <property type="entry name" value="Glucosamine-6-phosphate deaminase"/>
    <property type="match status" value="1"/>
</dbReference>
<dbReference type="Gene3D" id="3.40.50.1360">
    <property type="match status" value="1"/>
</dbReference>
<dbReference type="HAMAP" id="MF_01241">
    <property type="entry name" value="GlcN6P_deamin"/>
    <property type="match status" value="1"/>
</dbReference>
<dbReference type="InterPro" id="IPR006148">
    <property type="entry name" value="Glc/Gal-6P_isomerase"/>
</dbReference>
<dbReference type="InterPro" id="IPR004547">
    <property type="entry name" value="Glucosamine6P_isomerase"/>
</dbReference>
<dbReference type="InterPro" id="IPR018321">
    <property type="entry name" value="Glucosamine6P_isomerase_CS"/>
</dbReference>
<dbReference type="InterPro" id="IPR037171">
    <property type="entry name" value="NagB/RpiA_transferase-like"/>
</dbReference>
<dbReference type="NCBIfam" id="TIGR00502">
    <property type="entry name" value="nagB"/>
    <property type="match status" value="1"/>
</dbReference>
<dbReference type="PANTHER" id="PTHR11280">
    <property type="entry name" value="GLUCOSAMINE-6-PHOSPHATE ISOMERASE"/>
    <property type="match status" value="1"/>
</dbReference>
<dbReference type="PANTHER" id="PTHR11280:SF5">
    <property type="entry name" value="GLUCOSAMINE-6-PHOSPHATE ISOMERASE"/>
    <property type="match status" value="1"/>
</dbReference>
<dbReference type="Pfam" id="PF01182">
    <property type="entry name" value="Glucosamine_iso"/>
    <property type="match status" value="1"/>
</dbReference>
<dbReference type="SUPFAM" id="SSF100950">
    <property type="entry name" value="NagB/RpiA/CoA transferase-like"/>
    <property type="match status" value="1"/>
</dbReference>
<dbReference type="PROSITE" id="PS01161">
    <property type="entry name" value="GLC_GALNAC_ISOMERASE"/>
    <property type="match status" value="1"/>
</dbReference>
<sequence length="254" mass="27253">MKLVIVKDYAELSRKAAEMLVSEVKANPKTVLGLATGGTPVGMYRELIKLSQAQSIDYSQASSFNLDEYVGLSSTHPQSYRSYMEENLFNHINIPAEKTHVPVGNTTDHLAECARYEEAIRLAGGIDIQVLGIGNNGHIGFNEPGSPADSLTRVVQLTDSTIEANARYFDSVEQVPTQAVSMGIKTILGAKKVVLLASGEAKAEAVRLMLEEEPTADVPASLLQLHRDVTVIVDQEAASKLTTSILAGTKPSGS</sequence>
<reference key="1">
    <citation type="submission" date="2005-03" db="EMBL/GenBank/DDBJ databases">
        <title>Brevibacillus brevis strain 47, complete genome.</title>
        <authorList>
            <person name="Hosoyama A."/>
            <person name="Yamada R."/>
            <person name="Hongo Y."/>
            <person name="Terui Y."/>
            <person name="Ankai A."/>
            <person name="Masuyama W."/>
            <person name="Sekiguchi M."/>
            <person name="Takeda T."/>
            <person name="Asano K."/>
            <person name="Ohji S."/>
            <person name="Ichikawa N."/>
            <person name="Narita S."/>
            <person name="Aoki N."/>
            <person name="Miura H."/>
            <person name="Matsushita S."/>
            <person name="Sekigawa T."/>
            <person name="Yamagata H."/>
            <person name="Yoshikawa H."/>
            <person name="Udaka S."/>
            <person name="Tanikawa S."/>
            <person name="Fujita N."/>
        </authorList>
    </citation>
    <scope>NUCLEOTIDE SEQUENCE [LARGE SCALE GENOMIC DNA]</scope>
    <source>
        <strain>47 / JCM 6285 / NBRC 100599</strain>
    </source>
</reference>
<organism>
    <name type="scientific">Brevibacillus brevis (strain 47 / JCM 6285 / NBRC 100599)</name>
    <dbReference type="NCBI Taxonomy" id="358681"/>
    <lineage>
        <taxon>Bacteria</taxon>
        <taxon>Bacillati</taxon>
        <taxon>Bacillota</taxon>
        <taxon>Bacilli</taxon>
        <taxon>Bacillales</taxon>
        <taxon>Paenibacillaceae</taxon>
        <taxon>Brevibacillus</taxon>
    </lineage>
</organism>
<evidence type="ECO:0000255" key="1">
    <source>
        <dbReference type="HAMAP-Rule" id="MF_01241"/>
    </source>
</evidence>
<proteinExistence type="inferred from homology"/>
<feature type="chain" id="PRO_1000165014" description="Glucosamine-6-phosphate deaminase">
    <location>
        <begin position="1"/>
        <end position="254"/>
    </location>
</feature>
<feature type="active site" description="Proton acceptor; for enolization step" evidence="1">
    <location>
        <position position="67"/>
    </location>
</feature>
<feature type="active site" description="For ring-opening step" evidence="1">
    <location>
        <position position="136"/>
    </location>
</feature>
<feature type="active site" description="Proton acceptor; for ring-opening step" evidence="1">
    <location>
        <position position="138"/>
    </location>
</feature>
<feature type="active site" description="For ring-opening step" evidence="1">
    <location>
        <position position="143"/>
    </location>
</feature>